<keyword id="KW-0030">Aminoacyl-tRNA synthetase</keyword>
<keyword id="KW-0067">ATP-binding</keyword>
<keyword id="KW-0963">Cytoplasm</keyword>
<keyword id="KW-0436">Ligase</keyword>
<keyword id="KW-0547">Nucleotide-binding</keyword>
<keyword id="KW-0648">Protein biosynthesis</keyword>
<comment type="catalytic activity">
    <reaction evidence="1">
        <text>tRNA(Asn) + L-asparagine + ATP = L-asparaginyl-tRNA(Asn) + AMP + diphosphate + H(+)</text>
        <dbReference type="Rhea" id="RHEA:11180"/>
        <dbReference type="Rhea" id="RHEA-COMP:9659"/>
        <dbReference type="Rhea" id="RHEA-COMP:9674"/>
        <dbReference type="ChEBI" id="CHEBI:15378"/>
        <dbReference type="ChEBI" id="CHEBI:30616"/>
        <dbReference type="ChEBI" id="CHEBI:33019"/>
        <dbReference type="ChEBI" id="CHEBI:58048"/>
        <dbReference type="ChEBI" id="CHEBI:78442"/>
        <dbReference type="ChEBI" id="CHEBI:78515"/>
        <dbReference type="ChEBI" id="CHEBI:456215"/>
        <dbReference type="EC" id="6.1.1.22"/>
    </reaction>
</comment>
<comment type="subunit">
    <text evidence="1">Homodimer.</text>
</comment>
<comment type="subcellular location">
    <subcellularLocation>
        <location evidence="1">Cytoplasm</location>
    </subcellularLocation>
</comment>
<comment type="similarity">
    <text evidence="1">Belongs to the class-II aminoacyl-tRNA synthetase family.</text>
</comment>
<sequence length="467" mass="53194">MTEVFTIKQCLDGEISIDETVTVRGWVKTRRDSKAGLSFISLHDGSCFSPIQIVATDQLSNYHKEVTKLTAGCSMIATGKLVASQGKGQFFEIQAESIEVVGWVENPDTYPIQAKRHTLEFLREVAHLRPRTNTISAVTRVRHSLAQAIHRFYHEQGFFWVHTPIITASDCEGAGEMFRVSTLDLLNIPKNDKGQIDFSKDFFGRETFLTVSGQLNVEAYCMAMSKVYTFGPTFRAENSNTSRHLAEFWMIEPEIAFANLEDICKLSQSMLRYLCKTVLEERADDMDFFNQFVAPGCIERMEHIADSEFEIMTYTDAVKALEASDQKFEFPVSWGLDLQSEHERYLAEVLCKKPVIVTNYPQEIKGFYMRLNDDGKTVAAMDVLAPGIGEIIGGSQREERLEILDRRMDECNLNKEHYQWYRDLRRYGTVPHAGFGLGFERLISYVTGVSNVRDVIPFPRTPGHADY</sequence>
<organism>
    <name type="scientific">Legionella pneumophila (strain Paris)</name>
    <dbReference type="NCBI Taxonomy" id="297246"/>
    <lineage>
        <taxon>Bacteria</taxon>
        <taxon>Pseudomonadati</taxon>
        <taxon>Pseudomonadota</taxon>
        <taxon>Gammaproteobacteria</taxon>
        <taxon>Legionellales</taxon>
        <taxon>Legionellaceae</taxon>
        <taxon>Legionella</taxon>
    </lineage>
</organism>
<gene>
    <name evidence="1" type="primary">asnS</name>
    <name type="ordered locus">lpp2236</name>
</gene>
<evidence type="ECO:0000255" key="1">
    <source>
        <dbReference type="HAMAP-Rule" id="MF_00534"/>
    </source>
</evidence>
<reference key="1">
    <citation type="journal article" date="2004" name="Nat. Genet.">
        <title>Evidence in the Legionella pneumophila genome for exploitation of host cell functions and high genome plasticity.</title>
        <authorList>
            <person name="Cazalet C."/>
            <person name="Rusniok C."/>
            <person name="Brueggemann H."/>
            <person name="Zidane N."/>
            <person name="Magnier A."/>
            <person name="Ma L."/>
            <person name="Tichit M."/>
            <person name="Jarraud S."/>
            <person name="Bouchier C."/>
            <person name="Vandenesch F."/>
            <person name="Kunst F."/>
            <person name="Etienne J."/>
            <person name="Glaser P."/>
            <person name="Buchrieser C."/>
        </authorList>
    </citation>
    <scope>NUCLEOTIDE SEQUENCE [LARGE SCALE GENOMIC DNA]</scope>
    <source>
        <strain>Paris</strain>
    </source>
</reference>
<protein>
    <recommendedName>
        <fullName evidence="1">Asparagine--tRNA ligase</fullName>
        <ecNumber evidence="1">6.1.1.22</ecNumber>
    </recommendedName>
    <alternativeName>
        <fullName evidence="1">Asparaginyl-tRNA synthetase</fullName>
        <shortName evidence="1">AsnRS</shortName>
    </alternativeName>
</protein>
<feature type="chain" id="PRO_1000211903" description="Asparagine--tRNA ligase">
    <location>
        <begin position="1"/>
        <end position="467"/>
    </location>
</feature>
<dbReference type="EC" id="6.1.1.22" evidence="1"/>
<dbReference type="EMBL" id="CR628336">
    <property type="protein sequence ID" value="CAH13388.1"/>
    <property type="molecule type" value="Genomic_DNA"/>
</dbReference>
<dbReference type="RefSeq" id="WP_015961403.1">
    <property type="nucleotide sequence ID" value="NC_006368.1"/>
</dbReference>
<dbReference type="SMR" id="Q5X300"/>
<dbReference type="KEGG" id="lpp:lpp2236"/>
<dbReference type="LegioList" id="lpp2236"/>
<dbReference type="HOGENOM" id="CLU_004553_2_0_6"/>
<dbReference type="GO" id="GO:0005737">
    <property type="term" value="C:cytoplasm"/>
    <property type="evidence" value="ECO:0007669"/>
    <property type="project" value="UniProtKB-SubCell"/>
</dbReference>
<dbReference type="GO" id="GO:0004816">
    <property type="term" value="F:asparagine-tRNA ligase activity"/>
    <property type="evidence" value="ECO:0007669"/>
    <property type="project" value="UniProtKB-UniRule"/>
</dbReference>
<dbReference type="GO" id="GO:0005524">
    <property type="term" value="F:ATP binding"/>
    <property type="evidence" value="ECO:0007669"/>
    <property type="project" value="UniProtKB-UniRule"/>
</dbReference>
<dbReference type="GO" id="GO:0003676">
    <property type="term" value="F:nucleic acid binding"/>
    <property type="evidence" value="ECO:0007669"/>
    <property type="project" value="InterPro"/>
</dbReference>
<dbReference type="GO" id="GO:0006421">
    <property type="term" value="P:asparaginyl-tRNA aminoacylation"/>
    <property type="evidence" value="ECO:0007669"/>
    <property type="project" value="UniProtKB-UniRule"/>
</dbReference>
<dbReference type="CDD" id="cd00776">
    <property type="entry name" value="AsxRS_core"/>
    <property type="match status" value="1"/>
</dbReference>
<dbReference type="CDD" id="cd04318">
    <property type="entry name" value="EcAsnRS_like_N"/>
    <property type="match status" value="1"/>
</dbReference>
<dbReference type="FunFam" id="3.30.930.10:FF:000016">
    <property type="entry name" value="Asparagine--tRNA ligase"/>
    <property type="match status" value="1"/>
</dbReference>
<dbReference type="Gene3D" id="3.30.930.10">
    <property type="entry name" value="Bira Bifunctional Protein, Domain 2"/>
    <property type="match status" value="1"/>
</dbReference>
<dbReference type="Gene3D" id="2.40.50.140">
    <property type="entry name" value="Nucleic acid-binding proteins"/>
    <property type="match status" value="1"/>
</dbReference>
<dbReference type="HAMAP" id="MF_00534">
    <property type="entry name" value="Asn_tRNA_synth"/>
    <property type="match status" value="1"/>
</dbReference>
<dbReference type="InterPro" id="IPR004364">
    <property type="entry name" value="Aa-tRNA-synt_II"/>
</dbReference>
<dbReference type="InterPro" id="IPR006195">
    <property type="entry name" value="aa-tRNA-synth_II"/>
</dbReference>
<dbReference type="InterPro" id="IPR045864">
    <property type="entry name" value="aa-tRNA-synth_II/BPL/LPL"/>
</dbReference>
<dbReference type="InterPro" id="IPR004522">
    <property type="entry name" value="Asn-tRNA-ligase"/>
</dbReference>
<dbReference type="InterPro" id="IPR002312">
    <property type="entry name" value="Asp/Asn-tRNA-synth_IIb"/>
</dbReference>
<dbReference type="InterPro" id="IPR012340">
    <property type="entry name" value="NA-bd_OB-fold"/>
</dbReference>
<dbReference type="InterPro" id="IPR004365">
    <property type="entry name" value="NA-bd_OB_tRNA"/>
</dbReference>
<dbReference type="NCBIfam" id="TIGR00457">
    <property type="entry name" value="asnS"/>
    <property type="match status" value="1"/>
</dbReference>
<dbReference type="NCBIfam" id="NF003037">
    <property type="entry name" value="PRK03932.1"/>
    <property type="match status" value="1"/>
</dbReference>
<dbReference type="PANTHER" id="PTHR22594:SF34">
    <property type="entry name" value="ASPARAGINE--TRNA LIGASE, MITOCHONDRIAL-RELATED"/>
    <property type="match status" value="1"/>
</dbReference>
<dbReference type="PANTHER" id="PTHR22594">
    <property type="entry name" value="ASPARTYL/LYSYL-TRNA SYNTHETASE"/>
    <property type="match status" value="1"/>
</dbReference>
<dbReference type="Pfam" id="PF00152">
    <property type="entry name" value="tRNA-synt_2"/>
    <property type="match status" value="1"/>
</dbReference>
<dbReference type="Pfam" id="PF01336">
    <property type="entry name" value="tRNA_anti-codon"/>
    <property type="match status" value="1"/>
</dbReference>
<dbReference type="PRINTS" id="PR01042">
    <property type="entry name" value="TRNASYNTHASP"/>
</dbReference>
<dbReference type="SUPFAM" id="SSF55681">
    <property type="entry name" value="Class II aaRS and biotin synthetases"/>
    <property type="match status" value="1"/>
</dbReference>
<dbReference type="SUPFAM" id="SSF50249">
    <property type="entry name" value="Nucleic acid-binding proteins"/>
    <property type="match status" value="1"/>
</dbReference>
<dbReference type="PROSITE" id="PS50862">
    <property type="entry name" value="AA_TRNA_LIGASE_II"/>
    <property type="match status" value="1"/>
</dbReference>
<accession>Q5X300</accession>
<proteinExistence type="inferred from homology"/>
<name>SYN_LEGPA</name>